<feature type="chain" id="PRO_0000095301" description="Tyrosine recombinase XerC">
    <location>
        <begin position="1"/>
        <end position="311"/>
    </location>
</feature>
<feature type="domain" description="Core-binding (CB)" evidence="3">
    <location>
        <begin position="14"/>
        <end position="100"/>
    </location>
</feature>
<feature type="domain" description="Tyr recombinase" evidence="2">
    <location>
        <begin position="121"/>
        <end position="303"/>
    </location>
</feature>
<feature type="active site" evidence="1">
    <location>
        <position position="163"/>
    </location>
</feature>
<feature type="active site" evidence="1">
    <location>
        <position position="187"/>
    </location>
</feature>
<feature type="active site" evidence="1">
    <location>
        <position position="255"/>
    </location>
</feature>
<feature type="active site" evidence="1">
    <location>
        <position position="258"/>
    </location>
</feature>
<feature type="active site" evidence="1">
    <location>
        <position position="281"/>
    </location>
</feature>
<feature type="active site" description="O-(3'-phospho-DNA)-tyrosine intermediate" evidence="1">
    <location>
        <position position="290"/>
    </location>
</feature>
<protein>
    <recommendedName>
        <fullName evidence="1">Tyrosine recombinase XerC</fullName>
    </recommendedName>
</protein>
<organism>
    <name type="scientific">Leptospira interrogans serogroup Icterohaemorrhagiae serovar Lai (strain 56601)</name>
    <dbReference type="NCBI Taxonomy" id="189518"/>
    <lineage>
        <taxon>Bacteria</taxon>
        <taxon>Pseudomonadati</taxon>
        <taxon>Spirochaetota</taxon>
        <taxon>Spirochaetia</taxon>
        <taxon>Leptospirales</taxon>
        <taxon>Leptospiraceae</taxon>
        <taxon>Leptospira</taxon>
    </lineage>
</organism>
<proteinExistence type="inferred from homology"/>
<name>XERC_LEPIN</name>
<dbReference type="EMBL" id="AE010300">
    <property type="protein sequence ID" value="AAN49546.2"/>
    <property type="molecule type" value="Genomic_DNA"/>
</dbReference>
<dbReference type="RefSeq" id="NP_712528.2">
    <property type="nucleotide sequence ID" value="NC_004342.2"/>
</dbReference>
<dbReference type="RefSeq" id="WP_002079116.1">
    <property type="nucleotide sequence ID" value="NC_004342.2"/>
</dbReference>
<dbReference type="SMR" id="Q7ZAM8"/>
<dbReference type="FunCoup" id="Q7ZAM8">
    <property type="interactions" value="37"/>
</dbReference>
<dbReference type="STRING" id="189518.LA_2347"/>
<dbReference type="PaxDb" id="189518-LA_2347"/>
<dbReference type="EnsemblBacteria" id="AAN49546">
    <property type="protein sequence ID" value="AAN49546"/>
    <property type="gene ID" value="LA_2347"/>
</dbReference>
<dbReference type="GeneID" id="61144896"/>
<dbReference type="KEGG" id="lil:LA_2347"/>
<dbReference type="PATRIC" id="fig|189518.3.peg.2331"/>
<dbReference type="HOGENOM" id="CLU_027562_9_2_12"/>
<dbReference type="InParanoid" id="Q7ZAM8"/>
<dbReference type="OrthoDB" id="9801717at2"/>
<dbReference type="Proteomes" id="UP000001408">
    <property type="component" value="Chromosome I"/>
</dbReference>
<dbReference type="GO" id="GO:0005737">
    <property type="term" value="C:cytoplasm"/>
    <property type="evidence" value="ECO:0007669"/>
    <property type="project" value="UniProtKB-SubCell"/>
</dbReference>
<dbReference type="GO" id="GO:0003677">
    <property type="term" value="F:DNA binding"/>
    <property type="evidence" value="ECO:0007669"/>
    <property type="project" value="UniProtKB-KW"/>
</dbReference>
<dbReference type="GO" id="GO:0009009">
    <property type="term" value="F:site-specific recombinase activity"/>
    <property type="evidence" value="ECO:0000318"/>
    <property type="project" value="GO_Central"/>
</dbReference>
<dbReference type="GO" id="GO:0009037">
    <property type="term" value="F:tyrosine-based site-specific recombinase activity"/>
    <property type="evidence" value="ECO:0007669"/>
    <property type="project" value="UniProtKB-UniRule"/>
</dbReference>
<dbReference type="GO" id="GO:0051301">
    <property type="term" value="P:cell division"/>
    <property type="evidence" value="ECO:0007669"/>
    <property type="project" value="UniProtKB-KW"/>
</dbReference>
<dbReference type="GO" id="GO:0007059">
    <property type="term" value="P:chromosome segregation"/>
    <property type="evidence" value="ECO:0000318"/>
    <property type="project" value="GO_Central"/>
</dbReference>
<dbReference type="GO" id="GO:0006310">
    <property type="term" value="P:DNA recombination"/>
    <property type="evidence" value="ECO:0000318"/>
    <property type="project" value="GO_Central"/>
</dbReference>
<dbReference type="GO" id="GO:0006313">
    <property type="term" value="P:DNA transposition"/>
    <property type="evidence" value="ECO:0007669"/>
    <property type="project" value="UniProtKB-UniRule"/>
</dbReference>
<dbReference type="CDD" id="cd00798">
    <property type="entry name" value="INT_XerDC_C"/>
    <property type="match status" value="1"/>
</dbReference>
<dbReference type="Gene3D" id="1.10.150.130">
    <property type="match status" value="1"/>
</dbReference>
<dbReference type="Gene3D" id="1.10.443.10">
    <property type="entry name" value="Intergrase catalytic core"/>
    <property type="match status" value="1"/>
</dbReference>
<dbReference type="HAMAP" id="MF_01808">
    <property type="entry name" value="Recomb_XerC_XerD"/>
    <property type="match status" value="1"/>
</dbReference>
<dbReference type="InterPro" id="IPR044068">
    <property type="entry name" value="CB"/>
</dbReference>
<dbReference type="InterPro" id="IPR011010">
    <property type="entry name" value="DNA_brk_join_enz"/>
</dbReference>
<dbReference type="InterPro" id="IPR013762">
    <property type="entry name" value="Integrase-like_cat_sf"/>
</dbReference>
<dbReference type="InterPro" id="IPR002104">
    <property type="entry name" value="Integrase_catalytic"/>
</dbReference>
<dbReference type="InterPro" id="IPR010998">
    <property type="entry name" value="Integrase_recombinase_N"/>
</dbReference>
<dbReference type="InterPro" id="IPR004107">
    <property type="entry name" value="Integrase_SAM-like_N"/>
</dbReference>
<dbReference type="InterPro" id="IPR011931">
    <property type="entry name" value="Recomb_XerC"/>
</dbReference>
<dbReference type="InterPro" id="IPR023009">
    <property type="entry name" value="Tyrosine_recombinase_XerC/XerD"/>
</dbReference>
<dbReference type="InterPro" id="IPR050090">
    <property type="entry name" value="Tyrosine_recombinase_XerCD"/>
</dbReference>
<dbReference type="NCBIfam" id="NF001399">
    <property type="entry name" value="PRK00283.1"/>
    <property type="match status" value="1"/>
</dbReference>
<dbReference type="NCBIfam" id="NF040815">
    <property type="entry name" value="recomb_XerA_Arch"/>
    <property type="match status" value="1"/>
</dbReference>
<dbReference type="NCBIfam" id="TIGR02224">
    <property type="entry name" value="recomb_XerC"/>
    <property type="match status" value="1"/>
</dbReference>
<dbReference type="PANTHER" id="PTHR30349">
    <property type="entry name" value="PHAGE INTEGRASE-RELATED"/>
    <property type="match status" value="1"/>
</dbReference>
<dbReference type="PANTHER" id="PTHR30349:SF77">
    <property type="entry name" value="TYROSINE RECOMBINASE XERC"/>
    <property type="match status" value="1"/>
</dbReference>
<dbReference type="Pfam" id="PF02899">
    <property type="entry name" value="Phage_int_SAM_1"/>
    <property type="match status" value="1"/>
</dbReference>
<dbReference type="Pfam" id="PF00589">
    <property type="entry name" value="Phage_integrase"/>
    <property type="match status" value="1"/>
</dbReference>
<dbReference type="SUPFAM" id="SSF56349">
    <property type="entry name" value="DNA breaking-rejoining enzymes"/>
    <property type="match status" value="1"/>
</dbReference>
<dbReference type="PROSITE" id="PS51900">
    <property type="entry name" value="CB"/>
    <property type="match status" value="1"/>
</dbReference>
<dbReference type="PROSITE" id="PS51898">
    <property type="entry name" value="TYR_RECOMBINASE"/>
    <property type="match status" value="1"/>
</dbReference>
<reference key="1">
    <citation type="journal article" date="2003" name="Nature">
        <title>Unique physiological and pathogenic features of Leptospira interrogans revealed by whole-genome sequencing.</title>
        <authorList>
            <person name="Ren S.-X."/>
            <person name="Fu G."/>
            <person name="Jiang X.-G."/>
            <person name="Zeng R."/>
            <person name="Miao Y.-G."/>
            <person name="Xu H."/>
            <person name="Zhang Y.-X."/>
            <person name="Xiong H."/>
            <person name="Lu G."/>
            <person name="Lu L.-F."/>
            <person name="Jiang H.-Q."/>
            <person name="Jia J."/>
            <person name="Tu Y.-F."/>
            <person name="Jiang J.-X."/>
            <person name="Gu W.-Y."/>
            <person name="Zhang Y.-Q."/>
            <person name="Cai Z."/>
            <person name="Sheng H.-H."/>
            <person name="Yin H.-F."/>
            <person name="Zhang Y."/>
            <person name="Zhu G.-F."/>
            <person name="Wan M."/>
            <person name="Huang H.-L."/>
            <person name="Qian Z."/>
            <person name="Wang S.-Y."/>
            <person name="Ma W."/>
            <person name="Yao Z.-J."/>
            <person name="Shen Y."/>
            <person name="Qiang B.-Q."/>
            <person name="Xia Q.-C."/>
            <person name="Guo X.-K."/>
            <person name="Danchin A."/>
            <person name="Saint Girons I."/>
            <person name="Somerville R.L."/>
            <person name="Wen Y.-M."/>
            <person name="Shi M.-H."/>
            <person name="Chen Z."/>
            <person name="Xu J.-G."/>
            <person name="Zhao G.-P."/>
        </authorList>
    </citation>
    <scope>NUCLEOTIDE SEQUENCE [LARGE SCALE GENOMIC DNA]</scope>
    <source>
        <strain>56601</strain>
    </source>
</reference>
<keyword id="KW-0131">Cell cycle</keyword>
<keyword id="KW-0132">Cell division</keyword>
<keyword id="KW-0159">Chromosome partition</keyword>
<keyword id="KW-0963">Cytoplasm</keyword>
<keyword id="KW-0229">DNA integration</keyword>
<keyword id="KW-0233">DNA recombination</keyword>
<keyword id="KW-0238">DNA-binding</keyword>
<keyword id="KW-1185">Reference proteome</keyword>
<gene>
    <name evidence="1" type="primary">xerC</name>
    <name type="ordered locus">LA_2347</name>
</gene>
<accession>Q7ZAM8</accession>
<evidence type="ECO:0000255" key="1">
    <source>
        <dbReference type="HAMAP-Rule" id="MF_01808"/>
    </source>
</evidence>
<evidence type="ECO:0000255" key="2">
    <source>
        <dbReference type="PROSITE-ProRule" id="PRU01246"/>
    </source>
</evidence>
<evidence type="ECO:0000255" key="3">
    <source>
        <dbReference type="PROSITE-ProRule" id="PRU01248"/>
    </source>
</evidence>
<comment type="function">
    <text evidence="1">Site-specific tyrosine recombinase, which acts by catalyzing the cutting and rejoining of the recombining DNA molecules. The XerC-XerD complex is essential to convert dimers of the bacterial chromosome into monomers to permit their segregation at cell division. It also contributes to the segregational stability of plasmids.</text>
</comment>
<comment type="subunit">
    <text evidence="1">Forms a cyclic heterotetrameric complex composed of two molecules of XerC and two molecules of XerD.</text>
</comment>
<comment type="subcellular location">
    <subcellularLocation>
        <location evidence="1">Cytoplasm</location>
    </subcellularLocation>
</comment>
<comment type="similarity">
    <text evidence="1">Belongs to the 'phage' integrase family. XerC subfamily.</text>
</comment>
<sequence length="311" mass="36547">MGDYPFQFPEFSSESLNETAKKFINYLKIEKNYSQNTINAYSIDLKFFFEFCEKEQLDIFQIEPVDIRSYFAYLAKKHEIDRRSQSRKLSSLRTFYKVLLREDLVKSNPATQLSFPKVRKEVPKNFRINETEEILEFESENASEVSEIRDRAMIEVLYSSGLRVFELVNAKLNSLSKDLTVLKVLGKGRKERFVYFGKEAVSSLQKYLEYRNVSFPDAEEIFLNQRGKKLTTRGVRYILNERRKKMGWEKTITPHKFRHTFATDLLDAGAEIRAVQELLGHSSLSTTQIYLSVSKEKIKEVYRKAHPHARK</sequence>